<name>GSTU2_ARATH</name>
<sequence>MAKKEESVKLLGFWISPFSRRVEMALKLKGVPYEYLEEDLPKKSTLLLELNPVHKKVPVLVHNDKLLSESHVILEYIDQTWNNNPILPHDPYEKAMVRFWAKFVDEQILPVGFMPLVKAEKGIDVAIEEIREMLMFLEKEVTGKDFFGGKTIGFLDMVAGSMIPFCLARAWECLGIDMTPEDTFPELNRWIKNLNEVEIVRECIPPKEKHIERMKKIIERAKSTF</sequence>
<evidence type="ECO:0000250" key="1"/>
<evidence type="ECO:0000250" key="2">
    <source>
        <dbReference type="UniProtKB" id="Q9ZW27"/>
    </source>
</evidence>
<evidence type="ECO:0000305" key="3"/>
<reference key="1">
    <citation type="journal article" date="2002" name="Plant Mol. Biol.">
        <title>Probing the diversity of the Arabidopsis glutathione S-transferase gene family.</title>
        <authorList>
            <person name="Wagner U."/>
            <person name="Edwards R."/>
            <person name="Dixon D.P."/>
            <person name="Mauch F."/>
        </authorList>
    </citation>
    <scope>NUCLEOTIDE SEQUENCE [MRNA]</scope>
    <scope>GENE FAMILY</scope>
    <scope>NOMENCLATURE</scope>
    <source>
        <strain>cv. Columbia</strain>
    </source>
</reference>
<reference key="2">
    <citation type="journal article" date="1999" name="Nature">
        <title>Sequence and analysis of chromosome 2 of the plant Arabidopsis thaliana.</title>
        <authorList>
            <person name="Lin X."/>
            <person name="Kaul S."/>
            <person name="Rounsley S.D."/>
            <person name="Shea T.P."/>
            <person name="Benito M.-I."/>
            <person name="Town C.D."/>
            <person name="Fujii C.Y."/>
            <person name="Mason T.M."/>
            <person name="Bowman C.L."/>
            <person name="Barnstead M.E."/>
            <person name="Feldblyum T.V."/>
            <person name="Buell C.R."/>
            <person name="Ketchum K.A."/>
            <person name="Lee J.J."/>
            <person name="Ronning C.M."/>
            <person name="Koo H.L."/>
            <person name="Moffat K.S."/>
            <person name="Cronin L.A."/>
            <person name="Shen M."/>
            <person name="Pai G."/>
            <person name="Van Aken S."/>
            <person name="Umayam L."/>
            <person name="Tallon L.J."/>
            <person name="Gill J.E."/>
            <person name="Adams M.D."/>
            <person name="Carrera A.J."/>
            <person name="Creasy T.H."/>
            <person name="Goodman H.M."/>
            <person name="Somerville C.R."/>
            <person name="Copenhaver G.P."/>
            <person name="Preuss D."/>
            <person name="Nierman W.C."/>
            <person name="White O."/>
            <person name="Eisen J.A."/>
            <person name="Salzberg S.L."/>
            <person name="Fraser C.M."/>
            <person name="Venter J.C."/>
        </authorList>
    </citation>
    <scope>NUCLEOTIDE SEQUENCE [LARGE SCALE GENOMIC DNA]</scope>
    <source>
        <strain>cv. Columbia</strain>
    </source>
</reference>
<reference key="3">
    <citation type="journal article" date="2017" name="Plant J.">
        <title>Araport11: a complete reannotation of the Arabidopsis thaliana reference genome.</title>
        <authorList>
            <person name="Cheng C.Y."/>
            <person name="Krishnakumar V."/>
            <person name="Chan A.P."/>
            <person name="Thibaud-Nissen F."/>
            <person name="Schobel S."/>
            <person name="Town C.D."/>
        </authorList>
    </citation>
    <scope>GENOME REANNOTATION</scope>
    <source>
        <strain>cv. Columbia</strain>
    </source>
</reference>
<reference key="4">
    <citation type="journal article" date="2003" name="Science">
        <title>Empirical analysis of transcriptional activity in the Arabidopsis genome.</title>
        <authorList>
            <person name="Yamada K."/>
            <person name="Lim J."/>
            <person name="Dale J.M."/>
            <person name="Chen H."/>
            <person name="Shinn P."/>
            <person name="Palm C.J."/>
            <person name="Southwick A.M."/>
            <person name="Wu H.C."/>
            <person name="Kim C.J."/>
            <person name="Nguyen M."/>
            <person name="Pham P.K."/>
            <person name="Cheuk R.F."/>
            <person name="Karlin-Newmann G."/>
            <person name="Liu S.X."/>
            <person name="Lam B."/>
            <person name="Sakano H."/>
            <person name="Wu T."/>
            <person name="Yu G."/>
            <person name="Miranda M."/>
            <person name="Quach H.L."/>
            <person name="Tripp M."/>
            <person name="Chang C.H."/>
            <person name="Lee J.M."/>
            <person name="Toriumi M.J."/>
            <person name="Chan M.M."/>
            <person name="Tang C.C."/>
            <person name="Onodera C.S."/>
            <person name="Deng J.M."/>
            <person name="Akiyama K."/>
            <person name="Ansari Y."/>
            <person name="Arakawa T."/>
            <person name="Banh J."/>
            <person name="Banno F."/>
            <person name="Bowser L."/>
            <person name="Brooks S.Y."/>
            <person name="Carninci P."/>
            <person name="Chao Q."/>
            <person name="Choy N."/>
            <person name="Enju A."/>
            <person name="Goldsmith A.D."/>
            <person name="Gurjal M."/>
            <person name="Hansen N.F."/>
            <person name="Hayashizaki Y."/>
            <person name="Johnson-Hopson C."/>
            <person name="Hsuan V.W."/>
            <person name="Iida K."/>
            <person name="Karnes M."/>
            <person name="Khan S."/>
            <person name="Koesema E."/>
            <person name="Ishida J."/>
            <person name="Jiang P.X."/>
            <person name="Jones T."/>
            <person name="Kawai J."/>
            <person name="Kamiya A."/>
            <person name="Meyers C."/>
            <person name="Nakajima M."/>
            <person name="Narusaka M."/>
            <person name="Seki M."/>
            <person name="Sakurai T."/>
            <person name="Satou M."/>
            <person name="Tamse R."/>
            <person name="Vaysberg M."/>
            <person name="Wallender E.K."/>
            <person name="Wong C."/>
            <person name="Yamamura Y."/>
            <person name="Yuan S."/>
            <person name="Shinozaki K."/>
            <person name="Davis R.W."/>
            <person name="Theologis A."/>
            <person name="Ecker J.R."/>
        </authorList>
    </citation>
    <scope>NUCLEOTIDE SEQUENCE [LARGE SCALE MRNA]</scope>
    <source>
        <strain>cv. Columbia</strain>
    </source>
</reference>
<dbReference type="EC" id="2.5.1.18"/>
<dbReference type="EMBL" id="AF288184">
    <property type="protein sequence ID" value="AAG30133.1"/>
    <property type="molecule type" value="mRNA"/>
</dbReference>
<dbReference type="EMBL" id="AC004561">
    <property type="protein sequence ID" value="AAC95190.1"/>
    <property type="molecule type" value="Genomic_DNA"/>
</dbReference>
<dbReference type="EMBL" id="CP002685">
    <property type="protein sequence ID" value="AEC08259.1"/>
    <property type="molecule type" value="Genomic_DNA"/>
</dbReference>
<dbReference type="EMBL" id="AY094455">
    <property type="protein sequence ID" value="AAM19826.1"/>
    <property type="molecule type" value="mRNA"/>
</dbReference>
<dbReference type="EMBL" id="AY122905">
    <property type="protein sequence ID" value="AAM67438.1"/>
    <property type="molecule type" value="mRNA"/>
</dbReference>
<dbReference type="PIR" id="H84696">
    <property type="entry name" value="H84696"/>
</dbReference>
<dbReference type="RefSeq" id="NP_180509.1">
    <property type="nucleotide sequence ID" value="NM_128502.2"/>
</dbReference>
<dbReference type="SMR" id="Q9ZW29"/>
<dbReference type="BioGRID" id="2847">
    <property type="interactions" value="4"/>
</dbReference>
<dbReference type="FunCoup" id="Q9ZW29">
    <property type="interactions" value="134"/>
</dbReference>
<dbReference type="IntAct" id="Q9ZW29">
    <property type="interactions" value="4"/>
</dbReference>
<dbReference type="STRING" id="3702.Q9ZW29"/>
<dbReference type="PaxDb" id="3702-AT2G29480.1"/>
<dbReference type="ProteomicsDB" id="248519"/>
<dbReference type="EnsemblPlants" id="AT2G29480.1">
    <property type="protein sequence ID" value="AT2G29480.1"/>
    <property type="gene ID" value="AT2G29480"/>
</dbReference>
<dbReference type="GeneID" id="817497"/>
<dbReference type="Gramene" id="AT2G29480.1">
    <property type="protein sequence ID" value="AT2G29480.1"/>
    <property type="gene ID" value="AT2G29480"/>
</dbReference>
<dbReference type="KEGG" id="ath:AT2G29480"/>
<dbReference type="Araport" id="AT2G29480"/>
<dbReference type="TAIR" id="AT2G29480">
    <property type="gene designation" value="GSTU2"/>
</dbReference>
<dbReference type="eggNOG" id="KOG0406">
    <property type="taxonomic scope" value="Eukaryota"/>
</dbReference>
<dbReference type="HOGENOM" id="CLU_011226_18_1_1"/>
<dbReference type="InParanoid" id="Q9ZW29"/>
<dbReference type="OMA" id="ARAWECM"/>
<dbReference type="PhylomeDB" id="Q9ZW29"/>
<dbReference type="BioCyc" id="ARA:AT2G29480-MONOMER"/>
<dbReference type="BRENDA" id="2.5.1.18">
    <property type="organism ID" value="399"/>
</dbReference>
<dbReference type="PRO" id="PR:Q9ZW29"/>
<dbReference type="Proteomes" id="UP000006548">
    <property type="component" value="Chromosome 2"/>
</dbReference>
<dbReference type="ExpressionAtlas" id="Q9ZW29">
    <property type="expression patterns" value="baseline and differential"/>
</dbReference>
<dbReference type="GO" id="GO:0005737">
    <property type="term" value="C:cytoplasm"/>
    <property type="evidence" value="ECO:0000303"/>
    <property type="project" value="TAIR"/>
</dbReference>
<dbReference type="GO" id="GO:0005829">
    <property type="term" value="C:cytosol"/>
    <property type="evidence" value="ECO:0007669"/>
    <property type="project" value="UniProtKB-SubCell"/>
</dbReference>
<dbReference type="GO" id="GO:0004364">
    <property type="term" value="F:glutathione transferase activity"/>
    <property type="evidence" value="ECO:0007669"/>
    <property type="project" value="UniProtKB-EC"/>
</dbReference>
<dbReference type="GO" id="GO:0006749">
    <property type="term" value="P:glutathione metabolic process"/>
    <property type="evidence" value="ECO:0007669"/>
    <property type="project" value="InterPro"/>
</dbReference>
<dbReference type="GO" id="GO:0009407">
    <property type="term" value="P:toxin catabolic process"/>
    <property type="evidence" value="ECO:0000304"/>
    <property type="project" value="TAIR"/>
</dbReference>
<dbReference type="CDD" id="cd03185">
    <property type="entry name" value="GST_C_Tau"/>
    <property type="match status" value="1"/>
</dbReference>
<dbReference type="CDD" id="cd03058">
    <property type="entry name" value="GST_N_Tau"/>
    <property type="match status" value="1"/>
</dbReference>
<dbReference type="FunFam" id="1.20.1050.10:FF:000012">
    <property type="entry name" value="Tau class glutathione S-transferase"/>
    <property type="match status" value="1"/>
</dbReference>
<dbReference type="FunFam" id="3.40.30.10:FF:000014">
    <property type="entry name" value="Tau class glutathione S-transferase"/>
    <property type="match status" value="1"/>
</dbReference>
<dbReference type="Gene3D" id="1.20.1050.10">
    <property type="match status" value="1"/>
</dbReference>
<dbReference type="Gene3D" id="3.40.30.10">
    <property type="entry name" value="Glutaredoxin"/>
    <property type="match status" value="1"/>
</dbReference>
<dbReference type="InterPro" id="IPR010987">
    <property type="entry name" value="Glutathione-S-Trfase_C-like"/>
</dbReference>
<dbReference type="InterPro" id="IPR036282">
    <property type="entry name" value="Glutathione-S-Trfase_C_sf"/>
</dbReference>
<dbReference type="InterPro" id="IPR004045">
    <property type="entry name" value="Glutathione_S-Trfase_N"/>
</dbReference>
<dbReference type="InterPro" id="IPR004046">
    <property type="entry name" value="GST_C"/>
</dbReference>
<dbReference type="InterPro" id="IPR045074">
    <property type="entry name" value="GST_C_Tau"/>
</dbReference>
<dbReference type="InterPro" id="IPR045073">
    <property type="entry name" value="Omega/Tau-like"/>
</dbReference>
<dbReference type="InterPro" id="IPR036249">
    <property type="entry name" value="Thioredoxin-like_sf"/>
</dbReference>
<dbReference type="PANTHER" id="PTHR11260:SF559">
    <property type="entry name" value="GLUTATHIONE S-TRANSFERASE U2"/>
    <property type="match status" value="1"/>
</dbReference>
<dbReference type="PANTHER" id="PTHR11260">
    <property type="entry name" value="GLUTATHIONE S-TRANSFERASE, GST, SUPERFAMILY, GST DOMAIN CONTAINING"/>
    <property type="match status" value="1"/>
</dbReference>
<dbReference type="Pfam" id="PF00043">
    <property type="entry name" value="GST_C"/>
    <property type="match status" value="1"/>
</dbReference>
<dbReference type="Pfam" id="PF02798">
    <property type="entry name" value="GST_N"/>
    <property type="match status" value="1"/>
</dbReference>
<dbReference type="SFLD" id="SFLDG01152">
    <property type="entry name" value="Main.3:_Omega-_and_Tau-like"/>
    <property type="match status" value="1"/>
</dbReference>
<dbReference type="SFLD" id="SFLDG00358">
    <property type="entry name" value="Main_(cytGST)"/>
    <property type="match status" value="1"/>
</dbReference>
<dbReference type="SUPFAM" id="SSF47616">
    <property type="entry name" value="GST C-terminal domain-like"/>
    <property type="match status" value="1"/>
</dbReference>
<dbReference type="SUPFAM" id="SSF52833">
    <property type="entry name" value="Thioredoxin-like"/>
    <property type="match status" value="1"/>
</dbReference>
<dbReference type="PROSITE" id="PS50405">
    <property type="entry name" value="GST_CTER"/>
    <property type="match status" value="1"/>
</dbReference>
<dbReference type="PROSITE" id="PS50404">
    <property type="entry name" value="GST_NTER"/>
    <property type="match status" value="1"/>
</dbReference>
<proteinExistence type="evidence at transcript level"/>
<organism>
    <name type="scientific">Arabidopsis thaliana</name>
    <name type="common">Mouse-ear cress</name>
    <dbReference type="NCBI Taxonomy" id="3702"/>
    <lineage>
        <taxon>Eukaryota</taxon>
        <taxon>Viridiplantae</taxon>
        <taxon>Streptophyta</taxon>
        <taxon>Embryophyta</taxon>
        <taxon>Tracheophyta</taxon>
        <taxon>Spermatophyta</taxon>
        <taxon>Magnoliopsida</taxon>
        <taxon>eudicotyledons</taxon>
        <taxon>Gunneridae</taxon>
        <taxon>Pentapetalae</taxon>
        <taxon>rosids</taxon>
        <taxon>malvids</taxon>
        <taxon>Brassicales</taxon>
        <taxon>Brassicaceae</taxon>
        <taxon>Camelineae</taxon>
        <taxon>Arabidopsis</taxon>
    </lineage>
</organism>
<comment type="function">
    <text evidence="1">May be involved in the conjugation of reduced glutathione to a wide number of exogenous and endogenous hydrophobic electrophiles and have a detoxification role against certain herbicides.</text>
</comment>
<comment type="catalytic activity">
    <reaction>
        <text>RX + glutathione = an S-substituted glutathione + a halide anion + H(+)</text>
        <dbReference type="Rhea" id="RHEA:16437"/>
        <dbReference type="ChEBI" id="CHEBI:15378"/>
        <dbReference type="ChEBI" id="CHEBI:16042"/>
        <dbReference type="ChEBI" id="CHEBI:17792"/>
        <dbReference type="ChEBI" id="CHEBI:57925"/>
        <dbReference type="ChEBI" id="CHEBI:90779"/>
        <dbReference type="EC" id="2.5.1.18"/>
    </reaction>
</comment>
<comment type="subcellular location">
    <subcellularLocation>
        <location evidence="3">Cytoplasm</location>
        <location evidence="3">Cytosol</location>
    </subcellularLocation>
</comment>
<comment type="similarity">
    <text evidence="3">Belongs to the GST superfamily. Tau family.</text>
</comment>
<protein>
    <recommendedName>
        <fullName>Glutathione S-transferase U2</fullName>
        <shortName>AtGSTU2</shortName>
        <ecNumber>2.5.1.18</ecNumber>
    </recommendedName>
    <alternativeName>
        <fullName>GST class-tau member 2</fullName>
    </alternativeName>
    <alternativeName>
        <fullName>Glutathione S-transferase 20</fullName>
    </alternativeName>
</protein>
<gene>
    <name type="primary">GSTU2</name>
    <name type="synonym">GST20</name>
    <name type="ordered locus">At2g29480</name>
    <name type="ORF">F16P2.14</name>
</gene>
<accession>Q9ZW29</accession>
<keyword id="KW-0963">Cytoplasm</keyword>
<keyword id="KW-0216">Detoxification</keyword>
<keyword id="KW-0597">Phosphoprotein</keyword>
<keyword id="KW-1185">Reference proteome</keyword>
<keyword id="KW-0808">Transferase</keyword>
<feature type="chain" id="PRO_0000413549" description="Glutathione S-transferase U2">
    <location>
        <begin position="1"/>
        <end position="225"/>
    </location>
</feature>
<feature type="domain" description="GST N-terminal">
    <location>
        <begin position="6"/>
        <end position="85"/>
    </location>
</feature>
<feature type="domain" description="GST C-terminal">
    <location>
        <begin position="90"/>
        <end position="217"/>
    </location>
</feature>
<feature type="binding site" evidence="1">
    <location>
        <begin position="16"/>
        <end position="17"/>
    </location>
    <ligand>
        <name>glutathione</name>
        <dbReference type="ChEBI" id="CHEBI:57925"/>
    </ligand>
</feature>
<feature type="binding site" evidence="1">
    <location>
        <begin position="42"/>
        <end position="43"/>
    </location>
    <ligand>
        <name>glutathione</name>
        <dbReference type="ChEBI" id="CHEBI:57925"/>
    </ligand>
</feature>
<feature type="binding site" evidence="1">
    <location>
        <begin position="56"/>
        <end position="57"/>
    </location>
    <ligand>
        <name>glutathione</name>
        <dbReference type="ChEBI" id="CHEBI:57925"/>
    </ligand>
</feature>
<feature type="binding site" evidence="1">
    <location>
        <begin position="69"/>
        <end position="70"/>
    </location>
    <ligand>
        <name>glutathione</name>
        <dbReference type="ChEBI" id="CHEBI:57925"/>
    </ligand>
</feature>
<feature type="modified residue" description="Phosphothreonine" evidence="2">
    <location>
        <position position="151"/>
    </location>
</feature>